<reference key="1">
    <citation type="journal article" date="2007" name="J. Bacteriol.">
        <title>The complete genome sequence of the lactic acid bacterial paradigm Lactococcus lactis subsp. cremoris MG1363.</title>
        <authorList>
            <person name="Wegmann U."/>
            <person name="O'Connell-Motherway M."/>
            <person name="Zomer A."/>
            <person name="Buist G."/>
            <person name="Shearman C."/>
            <person name="Canchaya C."/>
            <person name="Ventura M."/>
            <person name="Goesmann A."/>
            <person name="Gasson M.J."/>
            <person name="Kuipers O.P."/>
            <person name="van Sinderen D."/>
            <person name="Kok J."/>
        </authorList>
    </citation>
    <scope>NUCLEOTIDE SEQUENCE [LARGE SCALE GENOMIC DNA]</scope>
    <source>
        <strain>MG1363</strain>
    </source>
</reference>
<dbReference type="EC" id="4.2.1.33" evidence="1"/>
<dbReference type="EMBL" id="AM406671">
    <property type="protein sequence ID" value="CAL97875.1"/>
    <property type="molecule type" value="Genomic_DNA"/>
</dbReference>
<dbReference type="RefSeq" id="WP_011835161.1">
    <property type="nucleotide sequence ID" value="NC_009004.1"/>
</dbReference>
<dbReference type="SMR" id="A2RKR1"/>
<dbReference type="STRING" id="416870.llmg_1282"/>
<dbReference type="KEGG" id="llm:llmg_1282"/>
<dbReference type="eggNOG" id="COG0066">
    <property type="taxonomic scope" value="Bacteria"/>
</dbReference>
<dbReference type="HOGENOM" id="CLU_081378_0_3_9"/>
<dbReference type="OrthoDB" id="9777465at2"/>
<dbReference type="PhylomeDB" id="A2RKR1"/>
<dbReference type="UniPathway" id="UPA00048">
    <property type="reaction ID" value="UER00071"/>
</dbReference>
<dbReference type="Proteomes" id="UP000000364">
    <property type="component" value="Chromosome"/>
</dbReference>
<dbReference type="GO" id="GO:0009316">
    <property type="term" value="C:3-isopropylmalate dehydratase complex"/>
    <property type="evidence" value="ECO:0007669"/>
    <property type="project" value="InterPro"/>
</dbReference>
<dbReference type="GO" id="GO:0003861">
    <property type="term" value="F:3-isopropylmalate dehydratase activity"/>
    <property type="evidence" value="ECO:0007669"/>
    <property type="project" value="UniProtKB-UniRule"/>
</dbReference>
<dbReference type="GO" id="GO:0009098">
    <property type="term" value="P:L-leucine biosynthetic process"/>
    <property type="evidence" value="ECO:0007669"/>
    <property type="project" value="UniProtKB-UniRule"/>
</dbReference>
<dbReference type="CDD" id="cd01577">
    <property type="entry name" value="IPMI_Swivel"/>
    <property type="match status" value="1"/>
</dbReference>
<dbReference type="FunFam" id="3.20.19.10:FF:000003">
    <property type="entry name" value="3-isopropylmalate dehydratase small subunit"/>
    <property type="match status" value="1"/>
</dbReference>
<dbReference type="Gene3D" id="3.20.19.10">
    <property type="entry name" value="Aconitase, domain 4"/>
    <property type="match status" value="1"/>
</dbReference>
<dbReference type="HAMAP" id="MF_01031">
    <property type="entry name" value="LeuD_type1"/>
    <property type="match status" value="1"/>
</dbReference>
<dbReference type="InterPro" id="IPR004431">
    <property type="entry name" value="3-IsopropMal_deHydase_ssu"/>
</dbReference>
<dbReference type="InterPro" id="IPR015928">
    <property type="entry name" value="Aconitase/3IPM_dehydase_swvl"/>
</dbReference>
<dbReference type="InterPro" id="IPR000573">
    <property type="entry name" value="AconitaseA/IPMdHydase_ssu_swvl"/>
</dbReference>
<dbReference type="InterPro" id="IPR033940">
    <property type="entry name" value="IPMI_Swivel"/>
</dbReference>
<dbReference type="InterPro" id="IPR050075">
    <property type="entry name" value="LeuD"/>
</dbReference>
<dbReference type="NCBIfam" id="TIGR00171">
    <property type="entry name" value="leuD"/>
    <property type="match status" value="1"/>
</dbReference>
<dbReference type="NCBIfam" id="NF002458">
    <property type="entry name" value="PRK01641.1"/>
    <property type="match status" value="1"/>
</dbReference>
<dbReference type="PANTHER" id="PTHR43345:SF5">
    <property type="entry name" value="3-ISOPROPYLMALATE DEHYDRATASE SMALL SUBUNIT"/>
    <property type="match status" value="1"/>
</dbReference>
<dbReference type="PANTHER" id="PTHR43345">
    <property type="entry name" value="3-ISOPROPYLMALATE DEHYDRATASE SMALL SUBUNIT 2-RELATED-RELATED"/>
    <property type="match status" value="1"/>
</dbReference>
<dbReference type="Pfam" id="PF00694">
    <property type="entry name" value="Aconitase_C"/>
    <property type="match status" value="1"/>
</dbReference>
<dbReference type="SUPFAM" id="SSF52016">
    <property type="entry name" value="LeuD/IlvD-like"/>
    <property type="match status" value="1"/>
</dbReference>
<comment type="function">
    <text evidence="1">Catalyzes the isomerization between 2-isopropylmalate and 3-isopropylmalate, via the formation of 2-isopropylmaleate.</text>
</comment>
<comment type="catalytic activity">
    <reaction evidence="1">
        <text>(2R,3S)-3-isopropylmalate = (2S)-2-isopropylmalate</text>
        <dbReference type="Rhea" id="RHEA:32287"/>
        <dbReference type="ChEBI" id="CHEBI:1178"/>
        <dbReference type="ChEBI" id="CHEBI:35121"/>
        <dbReference type="EC" id="4.2.1.33"/>
    </reaction>
</comment>
<comment type="pathway">
    <text evidence="1">Amino-acid biosynthesis; L-leucine biosynthesis; L-leucine from 3-methyl-2-oxobutanoate: step 2/4.</text>
</comment>
<comment type="subunit">
    <text evidence="1">Heterodimer of LeuC and LeuD.</text>
</comment>
<comment type="similarity">
    <text evidence="1">Belongs to the LeuD family. LeuD type 1 subfamily.</text>
</comment>
<name>LEUD_LACLM</name>
<organism>
    <name type="scientific">Lactococcus lactis subsp. cremoris (strain MG1363)</name>
    <dbReference type="NCBI Taxonomy" id="416870"/>
    <lineage>
        <taxon>Bacteria</taxon>
        <taxon>Bacillati</taxon>
        <taxon>Bacillota</taxon>
        <taxon>Bacilli</taxon>
        <taxon>Lactobacillales</taxon>
        <taxon>Streptococcaceae</taxon>
        <taxon>Lactococcus</taxon>
        <taxon>Lactococcus cremoris subsp. cremoris</taxon>
    </lineage>
</organism>
<feature type="chain" id="PRO_1000063777" description="3-isopropylmalate dehydratase small subunit">
    <location>
        <begin position="1"/>
        <end position="191"/>
    </location>
</feature>
<sequence length="191" mass="21948">MEKFTIYKGTSVPLMNDNIDTDQIIPKQFLKAIDKKGFGKNLFYEWRYSKDYEENPDFMLNKPQYRKASLLISGDNFGSGSSREHAAWALADYGFRAIIAGSYSDIFYNNSLKNGLLPIVQPKEALKSLAQLSSQEEITIDLPHQLIQTSTENFYFEIDPIWKDKLINGLDDIGITLQYEQAITAYEQKHQ</sequence>
<evidence type="ECO:0000255" key="1">
    <source>
        <dbReference type="HAMAP-Rule" id="MF_01031"/>
    </source>
</evidence>
<accession>A2RKR1</accession>
<keyword id="KW-0028">Amino-acid biosynthesis</keyword>
<keyword id="KW-0100">Branched-chain amino acid biosynthesis</keyword>
<keyword id="KW-0432">Leucine biosynthesis</keyword>
<keyword id="KW-0456">Lyase</keyword>
<protein>
    <recommendedName>
        <fullName evidence="1">3-isopropylmalate dehydratase small subunit</fullName>
        <ecNumber evidence="1">4.2.1.33</ecNumber>
    </recommendedName>
    <alternativeName>
        <fullName evidence="1">Alpha-IPM isomerase</fullName>
        <shortName evidence="1">IPMI</shortName>
    </alternativeName>
    <alternativeName>
        <fullName evidence="1">Isopropylmalate isomerase</fullName>
    </alternativeName>
</protein>
<gene>
    <name evidence="1" type="primary">leuD</name>
    <name type="ordered locus">llmg_1282</name>
</gene>
<proteinExistence type="inferred from homology"/>